<proteinExistence type="inferred from homology"/>
<organism>
    <name type="scientific">Escherichia fergusonii (strain ATCC 35469 / DSM 13698 / CCUG 18766 / IAM 14443 / JCM 21226 / LMG 7866 / NBRC 102419 / NCTC 12128 / CDC 0568-73)</name>
    <dbReference type="NCBI Taxonomy" id="585054"/>
    <lineage>
        <taxon>Bacteria</taxon>
        <taxon>Pseudomonadati</taxon>
        <taxon>Pseudomonadota</taxon>
        <taxon>Gammaproteobacteria</taxon>
        <taxon>Enterobacterales</taxon>
        <taxon>Enterobacteriaceae</taxon>
        <taxon>Escherichia</taxon>
    </lineage>
</organism>
<sequence length="320" mass="35365">MRSAQVYRWQIPMDAGVVLRDRRLKTRDGLYVCLREGECEGWGEISPLPGFSQETWEEAQCVLLAWVNNWLAGDCELPQMPSVAFGVSCALAELADTLPQAANFRAAPLCNGDPDDLILKLADMPGEKVAKVKVGLYEAVRDGMVVNLLLEAIPDLHLRLDANRAWTPLKGQQFAKYVNPDYRGRIAFLEEPCKTREDSRAFARETGIAIAWDESLREPDFAFVAEEGVRAVVIKPTLTGSLEKVHEQVQAAHALGLTAVISSSIESSLGLTQLARIAAWLTPDTIPGLDTLDLMQAQQVRRWPGSTLPFVDVDALERLL</sequence>
<feature type="chain" id="PRO_1000125574" description="o-succinylbenzoate synthase">
    <location>
        <begin position="1"/>
        <end position="320"/>
    </location>
</feature>
<feature type="active site" description="Proton donor" evidence="1">
    <location>
        <position position="133"/>
    </location>
</feature>
<feature type="active site" description="Proton acceptor" evidence="1">
    <location>
        <position position="235"/>
    </location>
</feature>
<feature type="binding site" evidence="1">
    <location>
        <position position="161"/>
    </location>
    <ligand>
        <name>Mg(2+)</name>
        <dbReference type="ChEBI" id="CHEBI:18420"/>
    </ligand>
</feature>
<feature type="binding site" evidence="1">
    <location>
        <position position="190"/>
    </location>
    <ligand>
        <name>Mg(2+)</name>
        <dbReference type="ChEBI" id="CHEBI:18420"/>
    </ligand>
</feature>
<feature type="binding site" evidence="1">
    <location>
        <position position="213"/>
    </location>
    <ligand>
        <name>Mg(2+)</name>
        <dbReference type="ChEBI" id="CHEBI:18420"/>
    </ligand>
</feature>
<gene>
    <name evidence="1" type="primary">menC</name>
    <name type="ordered locus">EFER_0907</name>
</gene>
<keyword id="KW-0456">Lyase</keyword>
<keyword id="KW-0460">Magnesium</keyword>
<keyword id="KW-0474">Menaquinone biosynthesis</keyword>
<keyword id="KW-0479">Metal-binding</keyword>
<comment type="function">
    <text evidence="1">Converts 2-succinyl-6-hydroxy-2,4-cyclohexadiene-1-carboxylate (SHCHC) to 2-succinylbenzoate (OSB).</text>
</comment>
<comment type="catalytic activity">
    <reaction evidence="1">
        <text>(1R,6R)-6-hydroxy-2-succinyl-cyclohexa-2,4-diene-1-carboxylate = 2-succinylbenzoate + H2O</text>
        <dbReference type="Rhea" id="RHEA:10196"/>
        <dbReference type="ChEBI" id="CHEBI:15377"/>
        <dbReference type="ChEBI" id="CHEBI:18325"/>
        <dbReference type="ChEBI" id="CHEBI:58689"/>
        <dbReference type="EC" id="4.2.1.113"/>
    </reaction>
</comment>
<comment type="cofactor">
    <cofactor evidence="1">
        <name>a divalent metal cation</name>
        <dbReference type="ChEBI" id="CHEBI:60240"/>
    </cofactor>
</comment>
<comment type="pathway">
    <text evidence="1">Quinol/quinone metabolism; 1,4-dihydroxy-2-naphthoate biosynthesis; 1,4-dihydroxy-2-naphthoate from chorismate: step 4/7.</text>
</comment>
<comment type="pathway">
    <text evidence="1">Quinol/quinone metabolism; menaquinone biosynthesis.</text>
</comment>
<comment type="similarity">
    <text evidence="1">Belongs to the mandelate racemase/muconate lactonizing enzyme family. MenC type 1 subfamily.</text>
</comment>
<dbReference type="EC" id="4.2.1.113" evidence="1"/>
<dbReference type="EMBL" id="CU928158">
    <property type="protein sequence ID" value="CAQ88442.1"/>
    <property type="molecule type" value="Genomic_DNA"/>
</dbReference>
<dbReference type="RefSeq" id="WP_001255578.1">
    <property type="nucleotide sequence ID" value="NC_011740.1"/>
</dbReference>
<dbReference type="SMR" id="B7LM69"/>
<dbReference type="GeneID" id="75058034"/>
<dbReference type="KEGG" id="efe:EFER_0907"/>
<dbReference type="HOGENOM" id="CLU_030273_0_1_6"/>
<dbReference type="OrthoDB" id="3725747at2"/>
<dbReference type="UniPathway" id="UPA00079"/>
<dbReference type="UniPathway" id="UPA01057">
    <property type="reaction ID" value="UER00165"/>
</dbReference>
<dbReference type="Proteomes" id="UP000000745">
    <property type="component" value="Chromosome"/>
</dbReference>
<dbReference type="GO" id="GO:0000287">
    <property type="term" value="F:magnesium ion binding"/>
    <property type="evidence" value="ECO:0007669"/>
    <property type="project" value="UniProtKB-UniRule"/>
</dbReference>
<dbReference type="GO" id="GO:0043748">
    <property type="term" value="F:O-succinylbenzoate synthase activity"/>
    <property type="evidence" value="ECO:0007669"/>
    <property type="project" value="UniProtKB-EC"/>
</dbReference>
<dbReference type="GO" id="GO:0009234">
    <property type="term" value="P:menaquinone biosynthetic process"/>
    <property type="evidence" value="ECO:0007669"/>
    <property type="project" value="UniProtKB-UniRule"/>
</dbReference>
<dbReference type="CDD" id="cd03320">
    <property type="entry name" value="OSBS"/>
    <property type="match status" value="1"/>
</dbReference>
<dbReference type="FunFam" id="3.20.20.120:FF:000006">
    <property type="entry name" value="o-succinylbenzoate synthase"/>
    <property type="match status" value="1"/>
</dbReference>
<dbReference type="FunFam" id="3.30.390.10:FF:000005">
    <property type="entry name" value="o-succinylbenzoate synthase"/>
    <property type="match status" value="1"/>
</dbReference>
<dbReference type="Gene3D" id="3.20.20.120">
    <property type="entry name" value="Enolase-like C-terminal domain"/>
    <property type="match status" value="1"/>
</dbReference>
<dbReference type="Gene3D" id="3.30.390.10">
    <property type="entry name" value="Enolase-like, N-terminal domain"/>
    <property type="match status" value="1"/>
</dbReference>
<dbReference type="HAMAP" id="MF_00470">
    <property type="entry name" value="MenC_1"/>
    <property type="match status" value="1"/>
</dbReference>
<dbReference type="InterPro" id="IPR036849">
    <property type="entry name" value="Enolase-like_C_sf"/>
</dbReference>
<dbReference type="InterPro" id="IPR029017">
    <property type="entry name" value="Enolase-like_N"/>
</dbReference>
<dbReference type="InterPro" id="IPR029065">
    <property type="entry name" value="Enolase_C-like"/>
</dbReference>
<dbReference type="InterPro" id="IPR013342">
    <property type="entry name" value="Mandelate_racemase_C"/>
</dbReference>
<dbReference type="InterPro" id="IPR010196">
    <property type="entry name" value="OSB_synthase_MenC1"/>
</dbReference>
<dbReference type="InterPro" id="IPR041338">
    <property type="entry name" value="OSBS_N"/>
</dbReference>
<dbReference type="NCBIfam" id="TIGR01927">
    <property type="entry name" value="menC_gam_Gplu"/>
    <property type="match status" value="1"/>
</dbReference>
<dbReference type="NCBIfam" id="NF003473">
    <property type="entry name" value="PRK05105.1"/>
    <property type="match status" value="1"/>
</dbReference>
<dbReference type="PANTHER" id="PTHR48073:SF2">
    <property type="entry name" value="O-SUCCINYLBENZOATE SYNTHASE"/>
    <property type="match status" value="1"/>
</dbReference>
<dbReference type="PANTHER" id="PTHR48073">
    <property type="entry name" value="O-SUCCINYLBENZOATE SYNTHASE-RELATED"/>
    <property type="match status" value="1"/>
</dbReference>
<dbReference type="Pfam" id="PF21508">
    <property type="entry name" value="MenC_N"/>
    <property type="match status" value="1"/>
</dbReference>
<dbReference type="Pfam" id="PF13378">
    <property type="entry name" value="MR_MLE_C"/>
    <property type="match status" value="1"/>
</dbReference>
<dbReference type="SFLD" id="SFLDS00001">
    <property type="entry name" value="Enolase"/>
    <property type="match status" value="1"/>
</dbReference>
<dbReference type="SFLD" id="SFLDF00009">
    <property type="entry name" value="o-succinylbenzoate_synthase"/>
    <property type="match status" value="1"/>
</dbReference>
<dbReference type="SMART" id="SM00922">
    <property type="entry name" value="MR_MLE"/>
    <property type="match status" value="1"/>
</dbReference>
<dbReference type="SUPFAM" id="SSF51604">
    <property type="entry name" value="Enolase C-terminal domain-like"/>
    <property type="match status" value="1"/>
</dbReference>
<dbReference type="SUPFAM" id="SSF54826">
    <property type="entry name" value="Enolase N-terminal domain-like"/>
    <property type="match status" value="1"/>
</dbReference>
<accession>B7LM69</accession>
<reference key="1">
    <citation type="journal article" date="2009" name="PLoS Genet.">
        <title>Organised genome dynamics in the Escherichia coli species results in highly diverse adaptive paths.</title>
        <authorList>
            <person name="Touchon M."/>
            <person name="Hoede C."/>
            <person name="Tenaillon O."/>
            <person name="Barbe V."/>
            <person name="Baeriswyl S."/>
            <person name="Bidet P."/>
            <person name="Bingen E."/>
            <person name="Bonacorsi S."/>
            <person name="Bouchier C."/>
            <person name="Bouvet O."/>
            <person name="Calteau A."/>
            <person name="Chiapello H."/>
            <person name="Clermont O."/>
            <person name="Cruveiller S."/>
            <person name="Danchin A."/>
            <person name="Diard M."/>
            <person name="Dossat C."/>
            <person name="Karoui M.E."/>
            <person name="Frapy E."/>
            <person name="Garry L."/>
            <person name="Ghigo J.M."/>
            <person name="Gilles A.M."/>
            <person name="Johnson J."/>
            <person name="Le Bouguenec C."/>
            <person name="Lescat M."/>
            <person name="Mangenot S."/>
            <person name="Martinez-Jehanne V."/>
            <person name="Matic I."/>
            <person name="Nassif X."/>
            <person name="Oztas S."/>
            <person name="Petit M.A."/>
            <person name="Pichon C."/>
            <person name="Rouy Z."/>
            <person name="Ruf C.S."/>
            <person name="Schneider D."/>
            <person name="Tourret J."/>
            <person name="Vacherie B."/>
            <person name="Vallenet D."/>
            <person name="Medigue C."/>
            <person name="Rocha E.P.C."/>
            <person name="Denamur E."/>
        </authorList>
    </citation>
    <scope>NUCLEOTIDE SEQUENCE [LARGE SCALE GENOMIC DNA]</scope>
    <source>
        <strain>ATCC 35469 / DSM 13698 / BCRC 15582 / CCUG 18766 / IAM 14443 / JCM 21226 / LMG 7866 / NBRC 102419 / NCTC 12128 / CDC 0568-73</strain>
    </source>
</reference>
<name>MENC_ESCF3</name>
<evidence type="ECO:0000255" key="1">
    <source>
        <dbReference type="HAMAP-Rule" id="MF_00470"/>
    </source>
</evidence>
<protein>
    <recommendedName>
        <fullName evidence="1">o-succinylbenzoate synthase</fullName>
        <shortName evidence="1">OSB synthase</shortName>
        <shortName evidence="1">OSBS</shortName>
        <ecNumber evidence="1">4.2.1.113</ecNumber>
    </recommendedName>
    <alternativeName>
        <fullName evidence="1">4-(2'-carboxyphenyl)-4-oxybutyric acid synthase</fullName>
    </alternativeName>
    <alternativeName>
        <fullName evidence="1">o-succinylbenzoic acid synthase</fullName>
    </alternativeName>
</protein>